<organism>
    <name type="scientific">Ambrosiozyma monospora</name>
    <name type="common">Yeast</name>
    <name type="synonym">Endomycopsis monosporus</name>
    <dbReference type="NCBI Taxonomy" id="43982"/>
    <lineage>
        <taxon>Eukaryota</taxon>
        <taxon>Fungi</taxon>
        <taxon>Dikarya</taxon>
        <taxon>Ascomycota</taxon>
        <taxon>Saccharomycotina</taxon>
        <taxon>Pichiomycetes</taxon>
        <taxon>Pichiales</taxon>
        <taxon>Pichiaceae</taxon>
        <taxon>Ambrosiozyma</taxon>
    </lineage>
</organism>
<comment type="function">
    <text evidence="4">NADH-dependent L-xylulose reductase; part of the yeast pathway for L-arabinose catabolism (PubMed:14736891). Reversibly converts L-xylulose to xylitol and D-ribulose to D-arabinitol (PubMed:14736891). It has a much lower activity with D-xylulose (PubMed:14736891). Sugar alcohols can serve as a substrate when the hydroxyl group of C-2 is in the L- and the hydroxyl group of the C-3 is in the D-configuration (PubMed:14736891). Also seems to be specific for sugar alcohols that have not more than 5 carbons since no activity is observed with dulcitol (galactitol), which has the hydroxyl group of C-2 in L- and of C-3 in D-configuration, but is a six-carbon sugar alcohol (PubMed:14736891).</text>
</comment>
<comment type="catalytic activity">
    <reaction evidence="4">
        <text>xylitol + NAD(+) = L-xylulose + NADH + H(+)</text>
        <dbReference type="Rhea" id="RHEA:68100"/>
        <dbReference type="ChEBI" id="CHEBI:15378"/>
        <dbReference type="ChEBI" id="CHEBI:17151"/>
        <dbReference type="ChEBI" id="CHEBI:17399"/>
        <dbReference type="ChEBI" id="CHEBI:57540"/>
        <dbReference type="ChEBI" id="CHEBI:57945"/>
        <dbReference type="EC" id="1.1.1.15"/>
    </reaction>
    <physiologicalReaction direction="left-to-right" evidence="4">
        <dbReference type="Rhea" id="RHEA:68101"/>
    </physiologicalReaction>
    <physiologicalReaction direction="right-to-left" evidence="4">
        <dbReference type="Rhea" id="RHEA:68102"/>
    </physiologicalReaction>
</comment>
<comment type="catalytic activity">
    <reaction evidence="4">
        <text>D-arabinitol + NAD(+) = D-ribulose + NADH + H(+)</text>
        <dbReference type="Rhea" id="RHEA:17389"/>
        <dbReference type="ChEBI" id="CHEBI:15378"/>
        <dbReference type="ChEBI" id="CHEBI:17173"/>
        <dbReference type="ChEBI" id="CHEBI:18333"/>
        <dbReference type="ChEBI" id="CHEBI:57540"/>
        <dbReference type="ChEBI" id="CHEBI:57945"/>
        <dbReference type="EC" id="1.1.1.250"/>
    </reaction>
    <physiologicalReaction direction="left-to-right" evidence="4">
        <dbReference type="Rhea" id="RHEA:17390"/>
    </physiologicalReaction>
    <physiologicalReaction direction="right-to-left" evidence="4">
        <dbReference type="Rhea" id="RHEA:17391"/>
    </physiologicalReaction>
</comment>
<comment type="biophysicochemical properties">
    <kinetics>
        <KM evidence="4">9.6 mM for L-xylulose</KM>
        <KM evidence="4">7.4 mM for D-ribulose</KM>
        <KM evidence="4">0.3 mM for D-arabinitol</KM>
        <KM evidence="4">7.2 mM for xylitol</KM>
        <Vmax evidence="4">1.7 umol/sec/mg enzyme with L-xylulose as substrate</Vmax>
        <Vmax evidence="4">2.7 umol/sec/mg enzyme with D-ribulose as substrate</Vmax>
        <Vmax evidence="4">0.6 umol/sec/mg enzyme with D-arabinitol as substrate</Vmax>
        <Vmax evidence="4">0.63 umol/sec/mg enzyme with xylitol as substrate</Vmax>
    </kinetics>
</comment>
<comment type="induction">
    <text evidence="4">Strongly expressed during growth on L-arabinose.</text>
</comment>
<comment type="similarity">
    <text evidence="6">Belongs to the short-chain dehydrogenases/reductases (SDR) family.</text>
</comment>
<proteinExistence type="evidence at protein level"/>
<name>ALX1_AMBMO</name>
<evidence type="ECO:0000250" key="1">
    <source>
        <dbReference type="UniProtKB" id="L0E2Z4"/>
    </source>
</evidence>
<evidence type="ECO:0000250" key="2">
    <source>
        <dbReference type="UniProtKB" id="O93868"/>
    </source>
</evidence>
<evidence type="ECO:0000255" key="3">
    <source>
        <dbReference type="PROSITE-ProRule" id="PRU10001"/>
    </source>
</evidence>
<evidence type="ECO:0000269" key="4">
    <source>
    </source>
</evidence>
<evidence type="ECO:0000303" key="5">
    <source>
    </source>
</evidence>
<evidence type="ECO:0000305" key="6"/>
<sequence>MTDYIPTFRFDGHLTIVTGACGGLAEALIKGLLAYGSDIALLDIDQEKTAAKQAEYHKYATEELKLKEVPKMGSYACDISDSDTVHKVFAQVAKDFGKLPLHLVNTAGYCENFPCEDYPAKNAEKMVKVNLLGSLYVSQAFAKPLIKEGIKGASVVLIGSMSGAIVNDPQNQVVYNMSKAGVIHLAKTLACEWAKYNIRVNSLNPGYIYGPLTKNVINGNEELYNRWISGIPQQRMSEPKEYIGAVLYLLSESAASYTTGASLLVDGGFTSW</sequence>
<protein>
    <recommendedName>
        <fullName evidence="5">NADH-dependent L-xylulose reductase</fullName>
        <ecNumber evidence="4">1.1.1.15</ecNumber>
        <ecNumber evidence="4">1.1.1.250</ecNumber>
    </recommendedName>
</protein>
<reference key="1">
    <citation type="journal article" date="2004" name="J. Biol. Chem.">
        <title>A novel NADH-linked l-xylulose reductase in the l-arabinose catabolic pathway of yeast.</title>
        <authorList>
            <person name="Verho R."/>
            <person name="Putkonen M."/>
            <person name="Londesborough J."/>
            <person name="Penttila M."/>
            <person name="Richard P."/>
        </authorList>
    </citation>
    <scope>NUCLEOTIDE SEQUENCE [MRNA]</scope>
    <scope>FUNCTION</scope>
    <scope>CATALYTIC ACTIVITY</scope>
    <scope>BIOPHYSICOCHEMICAL PROPERTIES</scope>
    <scope>SUBSTRATE SPECIFICITY</scope>
    <scope>INDUCTION</scope>
    <source>
        <strain>ATCC 56618 / CBS 2554 / JCM 7599 / NRRL Y-1484 / Goto TH-2</strain>
    </source>
</reference>
<feature type="chain" id="PRO_0000454240" description="NADH-dependent L-xylulose reductase">
    <location>
        <begin position="1"/>
        <end position="272"/>
    </location>
</feature>
<feature type="active site" description="Proton donor" evidence="2">
    <location>
        <position position="160"/>
    </location>
</feature>
<feature type="active site" description="Proton acceptor" evidence="3">
    <location>
        <position position="175"/>
    </location>
</feature>
<feature type="active site" description="Lowers pKa of active site Tyr" evidence="2">
    <location>
        <position position="179"/>
    </location>
</feature>
<feature type="binding site" evidence="1">
    <location>
        <position position="24"/>
    </location>
    <ligand>
        <name>NADP(+)</name>
        <dbReference type="ChEBI" id="CHEBI:58349"/>
    </ligand>
</feature>
<feature type="binding site" evidence="1">
    <location>
        <position position="78"/>
    </location>
    <ligand>
        <name>NADP(+)</name>
        <dbReference type="ChEBI" id="CHEBI:58349"/>
    </ligand>
</feature>
<feature type="binding site" evidence="2">
    <location>
        <position position="175"/>
    </location>
    <ligand>
        <name>NADP(+)</name>
        <dbReference type="ChEBI" id="CHEBI:58349"/>
    </ligand>
</feature>
<feature type="binding site" evidence="2">
    <location>
        <position position="179"/>
    </location>
    <ligand>
        <name>NADP(+)</name>
        <dbReference type="ChEBI" id="CHEBI:58349"/>
    </ligand>
</feature>
<feature type="binding site" evidence="2">
    <location>
        <position position="208"/>
    </location>
    <ligand>
        <name>NADP(+)</name>
        <dbReference type="ChEBI" id="CHEBI:58349"/>
    </ligand>
</feature>
<gene>
    <name evidence="5" type="primary">ALX1</name>
</gene>
<accession>Q70FD1</accession>
<keyword id="KW-0521">NADP</keyword>
<keyword id="KW-0560">Oxidoreductase</keyword>
<dbReference type="EC" id="1.1.1.15" evidence="4"/>
<dbReference type="EC" id="1.1.1.250" evidence="4"/>
<dbReference type="EMBL" id="AJ583159">
    <property type="protein sequence ID" value="CAE47547.1"/>
    <property type="molecule type" value="mRNA"/>
</dbReference>
<dbReference type="SMR" id="Q70FD1"/>
<dbReference type="BRENDA" id="1.1.1.10">
    <property type="organism ID" value="7272"/>
</dbReference>
<dbReference type="GO" id="GO:0047038">
    <property type="term" value="F:D-arabinitol 2-dehydrogenase activity"/>
    <property type="evidence" value="ECO:0000314"/>
    <property type="project" value="GO_Central"/>
</dbReference>
<dbReference type="GO" id="GO:0044105">
    <property type="term" value="F:L-xylulose reductase (NADH) activity"/>
    <property type="evidence" value="ECO:0000314"/>
    <property type="project" value="GO_Central"/>
</dbReference>
<dbReference type="GO" id="GO:0050664">
    <property type="term" value="F:oxidoreductase activity, acting on NAD(P)H, oxygen as acceptor"/>
    <property type="evidence" value="ECO:0007669"/>
    <property type="project" value="TreeGrafter"/>
</dbReference>
<dbReference type="GO" id="GO:0019572">
    <property type="term" value="P:L-arabinose catabolic process"/>
    <property type="evidence" value="ECO:0000314"/>
    <property type="project" value="GO_Central"/>
</dbReference>
<dbReference type="FunFam" id="3.40.50.720:FF:000084">
    <property type="entry name" value="Short-chain dehydrogenase reductase"/>
    <property type="match status" value="1"/>
</dbReference>
<dbReference type="Gene3D" id="3.40.50.720">
    <property type="entry name" value="NAD(P)-binding Rossmann-like Domain"/>
    <property type="match status" value="1"/>
</dbReference>
<dbReference type="InterPro" id="IPR036291">
    <property type="entry name" value="NAD(P)-bd_dom_sf"/>
</dbReference>
<dbReference type="InterPro" id="IPR020904">
    <property type="entry name" value="Sc_DH/Rdtase_CS"/>
</dbReference>
<dbReference type="InterPro" id="IPR002347">
    <property type="entry name" value="SDR_fam"/>
</dbReference>
<dbReference type="PANTHER" id="PTHR43008">
    <property type="entry name" value="BENZIL REDUCTASE"/>
    <property type="match status" value="1"/>
</dbReference>
<dbReference type="PANTHER" id="PTHR43008:SF14">
    <property type="entry name" value="DEHYDROGENASE ARBD, PUTATIVE-RELATED"/>
    <property type="match status" value="1"/>
</dbReference>
<dbReference type="Pfam" id="PF13561">
    <property type="entry name" value="adh_short_C2"/>
    <property type="match status" value="1"/>
</dbReference>
<dbReference type="PRINTS" id="PR00081">
    <property type="entry name" value="GDHRDH"/>
</dbReference>
<dbReference type="SUPFAM" id="SSF51735">
    <property type="entry name" value="NAD(P)-binding Rossmann-fold domains"/>
    <property type="match status" value="1"/>
</dbReference>
<dbReference type="PROSITE" id="PS00061">
    <property type="entry name" value="ADH_SHORT"/>
    <property type="match status" value="1"/>
</dbReference>